<protein>
    <recommendedName>
        <fullName>Patatin group M-1</fullName>
        <ecNumber>3.1.1.-</ecNumber>
    </recommendedName>
    <alternativeName>
        <fullName>Patatin class I</fullName>
    </alternativeName>
</protein>
<feature type="signal peptide">
    <location>
        <begin position="1"/>
        <end position="23"/>
    </location>
</feature>
<feature type="chain" id="PRO_0000032259" description="Patatin group M-1">
    <location>
        <begin position="24"/>
        <end position="386"/>
    </location>
</feature>
<feature type="domain" description="PNPLA" evidence="3">
    <location>
        <begin position="32"/>
        <end position="229"/>
    </location>
</feature>
<feature type="short sequence motif" description="GXGXXG" evidence="3">
    <location>
        <begin position="36"/>
        <end position="41"/>
    </location>
</feature>
<feature type="short sequence motif" description="GXSXG" evidence="3">
    <location>
        <begin position="75"/>
        <end position="79"/>
    </location>
</feature>
<feature type="short sequence motif" description="DGA/G" evidence="3">
    <location>
        <begin position="215"/>
        <end position="217"/>
    </location>
</feature>
<feature type="active site" description="Nucleophile" evidence="3">
    <location>
        <position position="77"/>
    </location>
</feature>
<feature type="active site" description="Proton acceptor" evidence="3">
    <location>
        <position position="215"/>
    </location>
</feature>
<feature type="glycosylation site" description="N-linked (GlcNAc...) asparagine" evidence="2">
    <location>
        <position position="115"/>
    </location>
</feature>
<reference key="1">
    <citation type="journal article" date="1988" name="Gene">
        <title>Molecular characterization of the patatin multigene family of potato.</title>
        <authorList>
            <person name="Mignery G.A."/>
            <person name="Pikaard C.S."/>
            <person name="Park W.D."/>
        </authorList>
    </citation>
    <scope>NUCLEOTIDE SEQUENCE [GENOMIC DNA]</scope>
    <source>
        <strain>cv. Superior</strain>
    </source>
</reference>
<reference key="2">
    <citation type="journal article" date="2006" name="Genetics">
        <title>Structural diversity and differential transcription of the patatin multicopy gene family during potato tuber development.</title>
        <authorList>
            <person name="Stupar R.M."/>
            <person name="Beaubien K.A."/>
            <person name="Jin W."/>
            <person name="Song J."/>
            <person name="Lee M.-K."/>
            <person name="Wu C."/>
            <person name="Zhang H.-B."/>
            <person name="Han B."/>
            <person name="Jiang J."/>
        </authorList>
    </citation>
    <scope>NUCLEOTIDE SEQUENCE [MRNA]</scope>
    <scope>DEVELOPMENTAL STAGE</scope>
    <scope>TISSUE SPECIFICITY</scope>
    <source>
        <strain>cv. Kennebec</strain>
    </source>
</reference>
<comment type="function">
    <text>Probable lipolytic acyl hydrolase (LAH), an activity which is thought to be involved in the response of tubers to pathogens.</text>
</comment>
<comment type="subcellular location">
    <subcellularLocation>
        <location evidence="1">Vacuole</location>
    </subcellularLocation>
</comment>
<comment type="tissue specificity">
    <text evidence="4">Tuber.</text>
</comment>
<comment type="developmental stage">
    <text evidence="4">Accumulates progressively during tuber formation from stolon.</text>
</comment>
<comment type="domain">
    <text>The nitrogen atoms of the two glycine residues in the GGXR motif define the oxyanion hole, and stabilize the oxyanion that forms during the nucleophilic attack by the catalytic serine during substrate cleavage.</text>
</comment>
<comment type="miscellaneous">
    <text>Patatin have a dual role as a somatic storage protein and as an enzyme involved in host resistance. This tuber protein represents approximately 40% of the total protein in mature tubers.</text>
</comment>
<comment type="similarity">
    <text evidence="5">Belongs to the patatin family.</text>
</comment>
<organism>
    <name type="scientific">Solanum tuberosum</name>
    <name type="common">Potato</name>
    <dbReference type="NCBI Taxonomy" id="4113"/>
    <lineage>
        <taxon>Eukaryota</taxon>
        <taxon>Viridiplantae</taxon>
        <taxon>Streptophyta</taxon>
        <taxon>Embryophyta</taxon>
        <taxon>Tracheophyta</taxon>
        <taxon>Spermatophyta</taxon>
        <taxon>Magnoliopsida</taxon>
        <taxon>eudicotyledons</taxon>
        <taxon>Gunneridae</taxon>
        <taxon>Pentapetalae</taxon>
        <taxon>asterids</taxon>
        <taxon>lamiids</taxon>
        <taxon>Solanales</taxon>
        <taxon>Solanaceae</taxon>
        <taxon>Solanoideae</taxon>
        <taxon>Solaneae</taxon>
        <taxon>Solanum</taxon>
    </lineage>
</organism>
<dbReference type="EC" id="3.1.1.-"/>
<dbReference type="EMBL" id="M18880">
    <property type="protein sequence ID" value="AAA33819.1"/>
    <property type="molecule type" value="Genomic_DNA"/>
</dbReference>
<dbReference type="EMBL" id="M18883">
    <property type="protein sequence ID" value="AAA33831.1"/>
    <property type="molecule type" value="Genomic_DNA"/>
</dbReference>
<dbReference type="EMBL" id="DQ274485">
    <property type="protein sequence ID" value="ABC55685.1"/>
    <property type="molecule type" value="mRNA"/>
</dbReference>
<dbReference type="PIR" id="A29810">
    <property type="entry name" value="A29810"/>
</dbReference>
<dbReference type="SMR" id="P11768"/>
<dbReference type="Allergome" id="639">
    <property type="allergen name" value="Sola t 1"/>
</dbReference>
<dbReference type="InParanoid" id="P11768"/>
<dbReference type="Proteomes" id="UP000011115">
    <property type="component" value="Unassembled WGS sequence"/>
</dbReference>
<dbReference type="ExpressionAtlas" id="P11768">
    <property type="expression patterns" value="baseline"/>
</dbReference>
<dbReference type="GO" id="GO:0005773">
    <property type="term" value="C:vacuole"/>
    <property type="evidence" value="ECO:0007669"/>
    <property type="project" value="UniProtKB-SubCell"/>
</dbReference>
<dbReference type="GO" id="GO:0047372">
    <property type="term" value="F:monoacylglycerol lipase activity"/>
    <property type="evidence" value="ECO:0000318"/>
    <property type="project" value="GO_Central"/>
</dbReference>
<dbReference type="GO" id="GO:0045735">
    <property type="term" value="F:nutrient reservoir activity"/>
    <property type="evidence" value="ECO:0007669"/>
    <property type="project" value="UniProtKB-KW"/>
</dbReference>
<dbReference type="GO" id="GO:0004620">
    <property type="term" value="F:phospholipase activity"/>
    <property type="evidence" value="ECO:0000318"/>
    <property type="project" value="GO_Central"/>
</dbReference>
<dbReference type="GO" id="GO:0006952">
    <property type="term" value="P:defense response"/>
    <property type="evidence" value="ECO:0007669"/>
    <property type="project" value="UniProtKB-KW"/>
</dbReference>
<dbReference type="GO" id="GO:0016042">
    <property type="term" value="P:lipid catabolic process"/>
    <property type="evidence" value="ECO:0007669"/>
    <property type="project" value="UniProtKB-KW"/>
</dbReference>
<dbReference type="Gene3D" id="3.40.1090.10">
    <property type="entry name" value="Cytosolic phospholipase A2 catalytic domain"/>
    <property type="match status" value="1"/>
</dbReference>
<dbReference type="InterPro" id="IPR016035">
    <property type="entry name" value="Acyl_Trfase/lysoPLipase"/>
</dbReference>
<dbReference type="InterPro" id="IPR002641">
    <property type="entry name" value="PNPLA_dom"/>
</dbReference>
<dbReference type="PANTHER" id="PTHR32176:SF85">
    <property type="entry name" value="PATATIN GROUP D-2"/>
    <property type="match status" value="1"/>
</dbReference>
<dbReference type="PANTHER" id="PTHR32176">
    <property type="entry name" value="XYLOSE ISOMERASE"/>
    <property type="match status" value="1"/>
</dbReference>
<dbReference type="Pfam" id="PF01734">
    <property type="entry name" value="Patatin"/>
    <property type="match status" value="1"/>
</dbReference>
<dbReference type="SUPFAM" id="SSF52151">
    <property type="entry name" value="FabD/lysophospholipase-like"/>
    <property type="match status" value="1"/>
</dbReference>
<dbReference type="PROSITE" id="PS51635">
    <property type="entry name" value="PNPLA"/>
    <property type="match status" value="1"/>
</dbReference>
<name>PATM1_SOLTU</name>
<accession>P11768</accession>
<accession>Q2MY53</accession>
<keyword id="KW-0325">Glycoprotein</keyword>
<keyword id="KW-0378">Hydrolase</keyword>
<keyword id="KW-0442">Lipid degradation</keyword>
<keyword id="KW-0443">Lipid metabolism</keyword>
<keyword id="KW-0611">Plant defense</keyword>
<keyword id="KW-1185">Reference proteome</keyword>
<keyword id="KW-0732">Signal</keyword>
<keyword id="KW-0758">Storage protein</keyword>
<keyword id="KW-0926">Vacuole</keyword>
<sequence>MATTKSFLILFFMILATTSSTCAKLEEMVTVLSIDGGGIKGIIPAIILEFLEGQLQEVDNNKDARLADYFDVIGGTSTGGLLTAMITTPNENNRPFAAAKDIVPFYFEHGPHIFNYSGSIIGPMYDGKYLLQVLQEKLGETRVHQALTEVAISSFDIKTNKPVIFTKSNLAKSPELDAKMYDICYSTAAAPIYFPPHYFITHTSNGDIYEFNLVDGGVATVGDPALLSLSVATRLAQEDPAFSSIKSLDYKQMLLLSLGTGTNSEFDKTYTAQEAAKWGPLRWMLAIQQMTNAASSYMTDYYISTVFQARHSQNNYLRVQENALTGTTTEMDDASEANMELLVQVGETLLKKPVSKDSPETYEEALKRFAKLLSDRKKLRANKASY</sequence>
<evidence type="ECO:0000250" key="1"/>
<evidence type="ECO:0000255" key="2"/>
<evidence type="ECO:0000255" key="3">
    <source>
        <dbReference type="PROSITE-ProRule" id="PRU01161"/>
    </source>
</evidence>
<evidence type="ECO:0000269" key="4">
    <source>
    </source>
</evidence>
<evidence type="ECO:0000305" key="5"/>
<proteinExistence type="evidence at transcript level"/>